<organism>
    <name type="scientific">Xylella fastidiosa (strain M23)</name>
    <dbReference type="NCBI Taxonomy" id="405441"/>
    <lineage>
        <taxon>Bacteria</taxon>
        <taxon>Pseudomonadati</taxon>
        <taxon>Pseudomonadota</taxon>
        <taxon>Gammaproteobacteria</taxon>
        <taxon>Lysobacterales</taxon>
        <taxon>Lysobacteraceae</taxon>
        <taxon>Xylella</taxon>
    </lineage>
</organism>
<comment type="function">
    <text evidence="1">Catalyzes the formation of 6,7-dimethyl-8-ribityllumazine by condensation of 5-amino-6-(D-ribitylamino)uracil with 3,4-dihydroxy-2-butanone 4-phosphate. This is the penultimate step in the biosynthesis of riboflavin.</text>
</comment>
<comment type="catalytic activity">
    <reaction evidence="1">
        <text>(2S)-2-hydroxy-3-oxobutyl phosphate + 5-amino-6-(D-ribitylamino)uracil = 6,7-dimethyl-8-(1-D-ribityl)lumazine + phosphate + 2 H2O + H(+)</text>
        <dbReference type="Rhea" id="RHEA:26152"/>
        <dbReference type="ChEBI" id="CHEBI:15377"/>
        <dbReference type="ChEBI" id="CHEBI:15378"/>
        <dbReference type="ChEBI" id="CHEBI:15934"/>
        <dbReference type="ChEBI" id="CHEBI:43474"/>
        <dbReference type="ChEBI" id="CHEBI:58201"/>
        <dbReference type="ChEBI" id="CHEBI:58830"/>
        <dbReference type="EC" id="2.5.1.78"/>
    </reaction>
</comment>
<comment type="pathway">
    <text evidence="1">Cofactor biosynthesis; riboflavin biosynthesis; riboflavin from 2-hydroxy-3-oxobutyl phosphate and 5-amino-6-(D-ribitylamino)uracil: step 1/2.</text>
</comment>
<comment type="subunit">
    <text evidence="1">Forms an icosahedral capsid composed of 60 subunits, arranged as a dodecamer of pentamers.</text>
</comment>
<comment type="similarity">
    <text evidence="1">Belongs to the DMRL synthase family.</text>
</comment>
<evidence type="ECO:0000255" key="1">
    <source>
        <dbReference type="HAMAP-Rule" id="MF_00178"/>
    </source>
</evidence>
<sequence>MSHYEGDLRPAGARFVIVCSRWNARITDALVAGACHSLVDNGVPDDAVDVVRVPGAWEIPIVANLLAQAGQHAAIIALGCVVRGDTRHYEHVADLCAEGMMSVQMQTGVPVLNGVLAVECIKDAEMRAGGSHGNKGAETALAALEMVSLLEKLP</sequence>
<feature type="chain" id="PRO_1000098253" description="6,7-dimethyl-8-ribityllumazine synthase">
    <location>
        <begin position="1"/>
        <end position="154"/>
    </location>
</feature>
<feature type="active site" description="Proton donor" evidence="1">
    <location>
        <position position="88"/>
    </location>
</feature>
<feature type="binding site" evidence="1">
    <location>
        <position position="22"/>
    </location>
    <ligand>
        <name>5-amino-6-(D-ribitylamino)uracil</name>
        <dbReference type="ChEBI" id="CHEBI:15934"/>
    </ligand>
</feature>
<feature type="binding site" evidence="1">
    <location>
        <begin position="56"/>
        <end position="58"/>
    </location>
    <ligand>
        <name>5-amino-6-(D-ribitylamino)uracil</name>
        <dbReference type="ChEBI" id="CHEBI:15934"/>
    </ligand>
</feature>
<feature type="binding site" evidence="1">
    <location>
        <begin position="80"/>
        <end position="82"/>
    </location>
    <ligand>
        <name>5-amino-6-(D-ribitylamino)uracil</name>
        <dbReference type="ChEBI" id="CHEBI:15934"/>
    </ligand>
</feature>
<feature type="binding site" evidence="1">
    <location>
        <begin position="85"/>
        <end position="86"/>
    </location>
    <ligand>
        <name>(2S)-2-hydroxy-3-oxobutyl phosphate</name>
        <dbReference type="ChEBI" id="CHEBI:58830"/>
    </ligand>
</feature>
<feature type="binding site" evidence="1">
    <location>
        <position position="113"/>
    </location>
    <ligand>
        <name>5-amino-6-(D-ribitylamino)uracil</name>
        <dbReference type="ChEBI" id="CHEBI:15934"/>
    </ligand>
</feature>
<feature type="binding site" evidence="1">
    <location>
        <position position="127"/>
    </location>
    <ligand>
        <name>(2S)-2-hydroxy-3-oxobutyl phosphate</name>
        <dbReference type="ChEBI" id="CHEBI:58830"/>
    </ligand>
</feature>
<name>RISB_XYLF2</name>
<protein>
    <recommendedName>
        <fullName evidence="1">6,7-dimethyl-8-ribityllumazine synthase</fullName>
        <shortName evidence="1">DMRL synthase</shortName>
        <shortName evidence="1">LS</shortName>
        <shortName evidence="1">Lumazine synthase</shortName>
        <ecNumber evidence="1">2.5.1.78</ecNumber>
    </recommendedName>
</protein>
<gene>
    <name evidence="1" type="primary">ribH</name>
    <name type="ordered locus">XfasM23_1845</name>
</gene>
<reference key="1">
    <citation type="journal article" date="2010" name="J. Bacteriol.">
        <title>Whole genome sequences of two Xylella fastidiosa strains (M12 and M23) causing almond leaf scorch disease in California.</title>
        <authorList>
            <person name="Chen J."/>
            <person name="Xie G."/>
            <person name="Han S."/>
            <person name="Chertkov O."/>
            <person name="Sims D."/>
            <person name="Civerolo E.L."/>
        </authorList>
    </citation>
    <scope>NUCLEOTIDE SEQUENCE [LARGE SCALE GENOMIC DNA]</scope>
    <source>
        <strain>M23</strain>
    </source>
</reference>
<dbReference type="EC" id="2.5.1.78" evidence="1"/>
<dbReference type="EMBL" id="CP001011">
    <property type="protein sequence ID" value="ACB93246.1"/>
    <property type="molecule type" value="Genomic_DNA"/>
</dbReference>
<dbReference type="RefSeq" id="WP_004086411.1">
    <property type="nucleotide sequence ID" value="NC_010577.1"/>
</dbReference>
<dbReference type="SMR" id="B2I8Q5"/>
<dbReference type="GeneID" id="93905590"/>
<dbReference type="KEGG" id="xfn:XfasM23_1845"/>
<dbReference type="HOGENOM" id="CLU_089358_1_2_6"/>
<dbReference type="UniPathway" id="UPA00275">
    <property type="reaction ID" value="UER00404"/>
</dbReference>
<dbReference type="Proteomes" id="UP000001698">
    <property type="component" value="Chromosome"/>
</dbReference>
<dbReference type="GO" id="GO:0005829">
    <property type="term" value="C:cytosol"/>
    <property type="evidence" value="ECO:0007669"/>
    <property type="project" value="TreeGrafter"/>
</dbReference>
<dbReference type="GO" id="GO:0009349">
    <property type="term" value="C:riboflavin synthase complex"/>
    <property type="evidence" value="ECO:0007669"/>
    <property type="project" value="InterPro"/>
</dbReference>
<dbReference type="GO" id="GO:0000906">
    <property type="term" value="F:6,7-dimethyl-8-ribityllumazine synthase activity"/>
    <property type="evidence" value="ECO:0007669"/>
    <property type="project" value="UniProtKB-UniRule"/>
</dbReference>
<dbReference type="GO" id="GO:0009231">
    <property type="term" value="P:riboflavin biosynthetic process"/>
    <property type="evidence" value="ECO:0007669"/>
    <property type="project" value="UniProtKB-UniRule"/>
</dbReference>
<dbReference type="CDD" id="cd09209">
    <property type="entry name" value="Lumazine_synthase-I"/>
    <property type="match status" value="1"/>
</dbReference>
<dbReference type="Gene3D" id="3.40.50.960">
    <property type="entry name" value="Lumazine/riboflavin synthase"/>
    <property type="match status" value="1"/>
</dbReference>
<dbReference type="HAMAP" id="MF_00178">
    <property type="entry name" value="Lumazine_synth"/>
    <property type="match status" value="1"/>
</dbReference>
<dbReference type="InterPro" id="IPR034964">
    <property type="entry name" value="LS"/>
</dbReference>
<dbReference type="InterPro" id="IPR002180">
    <property type="entry name" value="LS/RS"/>
</dbReference>
<dbReference type="InterPro" id="IPR036467">
    <property type="entry name" value="LS/RS_sf"/>
</dbReference>
<dbReference type="NCBIfam" id="TIGR00114">
    <property type="entry name" value="lumazine-synth"/>
    <property type="match status" value="1"/>
</dbReference>
<dbReference type="PANTHER" id="PTHR21058:SF0">
    <property type="entry name" value="6,7-DIMETHYL-8-RIBITYLLUMAZINE SYNTHASE"/>
    <property type="match status" value="1"/>
</dbReference>
<dbReference type="PANTHER" id="PTHR21058">
    <property type="entry name" value="6,7-DIMETHYL-8-RIBITYLLUMAZINE SYNTHASE DMRL SYNTHASE LUMAZINE SYNTHASE"/>
    <property type="match status" value="1"/>
</dbReference>
<dbReference type="Pfam" id="PF00885">
    <property type="entry name" value="DMRL_synthase"/>
    <property type="match status" value="1"/>
</dbReference>
<dbReference type="SUPFAM" id="SSF52121">
    <property type="entry name" value="Lumazine synthase"/>
    <property type="match status" value="1"/>
</dbReference>
<keyword id="KW-0686">Riboflavin biosynthesis</keyword>
<keyword id="KW-0808">Transferase</keyword>
<accession>B2I8Q5</accession>
<proteinExistence type="inferred from homology"/>